<reference key="1">
    <citation type="submission" date="2009-07" db="EMBL/GenBank/DDBJ databases">
        <title>The genome sequence of Mycobacterium tuberculosis strain KZN 1435.</title>
        <authorList>
            <person name="Murray M."/>
            <person name="Pillay M."/>
            <person name="Borowsky M.L."/>
            <person name="Young S.K."/>
            <person name="Zeng Q."/>
            <person name="Koehrsen M."/>
            <person name="Alvarado L."/>
            <person name="Berlin A.M."/>
            <person name="Borenstein D."/>
            <person name="Chen Z."/>
            <person name="Engels R."/>
            <person name="Freedman E."/>
            <person name="Gellesch M."/>
            <person name="Goldberg J."/>
            <person name="Griggs A."/>
            <person name="Gujja S."/>
            <person name="Heiman D.I."/>
            <person name="Hepburn T.A."/>
            <person name="Howarth C."/>
            <person name="Jen D."/>
            <person name="Larson L."/>
            <person name="Lewis B."/>
            <person name="Mehta T."/>
            <person name="Park D."/>
            <person name="Pearson M."/>
            <person name="Roberts A."/>
            <person name="Saif S."/>
            <person name="Shea T.D."/>
            <person name="Shenoy N."/>
            <person name="Sisk P."/>
            <person name="Stolte C."/>
            <person name="Sykes S.N."/>
            <person name="Walk T."/>
            <person name="White J."/>
            <person name="Yandava C."/>
            <person name="Haas B."/>
            <person name="Nusbaum C."/>
            <person name="Galagan J."/>
            <person name="Birren B."/>
        </authorList>
    </citation>
    <scope>NUCLEOTIDE SEQUENCE [LARGE SCALE GENOMIC DNA]</scope>
    <source>
        <strain>KZN 1435 / MDR</strain>
    </source>
</reference>
<keyword id="KW-0328">Glycosyltransferase</keyword>
<keyword id="KW-0460">Magnesium</keyword>
<keyword id="KW-0479">Metal-binding</keyword>
<keyword id="KW-0808">Transferase</keyword>
<organism>
    <name type="scientific">Mycobacterium tuberculosis (strain KZN 1435 / MDR)</name>
    <dbReference type="NCBI Taxonomy" id="478434"/>
    <lineage>
        <taxon>Bacteria</taxon>
        <taxon>Bacillati</taxon>
        <taxon>Actinomycetota</taxon>
        <taxon>Actinomycetes</taxon>
        <taxon>Mycobacteriales</taxon>
        <taxon>Mycobacteriaceae</taxon>
        <taxon>Mycobacterium</taxon>
        <taxon>Mycobacterium tuberculosis complex</taxon>
    </lineage>
</organism>
<comment type="function">
    <text evidence="1 2">Catalyzes the transfer of a N-acetyl-glucosamine moiety to 1D-myo-inositol 3-phosphate to produce 1D-myo-inositol 2-acetamido-2-deoxy-glucopyranoside 3-phosphate in the mycothiol (MSH) biosynthesis pathway (By similarity). MSH and WhiB3 are probably part of a regulatory circuit that mediates gene expression upon acid stress (like that found in host macrophage phagosomes). MSH is one of the major redox buffers which protects bacteria against redox stressors and antibiotics; loss of MSH or ergothioneine (ERG, the other major redox buffer in this bacteria) leads to respiratory alterations and bioenergetic deficiencies that negatively impact virulence (By similarity).</text>
</comment>
<comment type="catalytic activity">
    <reaction evidence="2">
        <text>1D-myo-inositol 3-phosphate + UDP-N-acetyl-alpha-D-glucosamine = 1D-myo-inositol 2-acetamido-2-deoxy-alpha-D-glucopyranoside 3-phosphate + UDP + H(+)</text>
        <dbReference type="Rhea" id="RHEA:26188"/>
        <dbReference type="ChEBI" id="CHEBI:15378"/>
        <dbReference type="ChEBI" id="CHEBI:57705"/>
        <dbReference type="ChEBI" id="CHEBI:58223"/>
        <dbReference type="ChEBI" id="CHEBI:58401"/>
        <dbReference type="ChEBI" id="CHEBI:58892"/>
        <dbReference type="EC" id="2.4.1.250"/>
    </reaction>
</comment>
<comment type="subunit">
    <text evidence="2">Homodimer.</text>
</comment>
<comment type="similarity">
    <text evidence="2">Belongs to the glycosyltransferase group 1 family. MshA subfamily.</text>
</comment>
<dbReference type="EC" id="2.4.1.250" evidence="2"/>
<dbReference type="EMBL" id="CP001658">
    <property type="protein sequence ID" value="ACT23520.1"/>
    <property type="molecule type" value="Genomic_DNA"/>
</dbReference>
<dbReference type="RefSeq" id="WP_003402367.1">
    <property type="nucleotide sequence ID" value="NZ_KK341220.1"/>
</dbReference>
<dbReference type="SMR" id="C6DT68"/>
<dbReference type="CAZy" id="GT4">
    <property type="family name" value="Glycosyltransferase Family 4"/>
</dbReference>
<dbReference type="KEGG" id="mtb:TBMG_00489"/>
<dbReference type="PATRIC" id="fig|478434.13.peg.3755"/>
<dbReference type="HOGENOM" id="CLU_009583_2_3_11"/>
<dbReference type="GO" id="GO:0008375">
    <property type="term" value="F:acetylglucosaminyltransferase activity"/>
    <property type="evidence" value="ECO:0007669"/>
    <property type="project" value="UniProtKB-UniRule"/>
</dbReference>
<dbReference type="GO" id="GO:0102710">
    <property type="term" value="F:D-inositol-3-phosphate glycosyltransferase activity"/>
    <property type="evidence" value="ECO:0007669"/>
    <property type="project" value="UniProtKB-EC"/>
</dbReference>
<dbReference type="GO" id="GO:0000287">
    <property type="term" value="F:magnesium ion binding"/>
    <property type="evidence" value="ECO:0007669"/>
    <property type="project" value="UniProtKB-UniRule"/>
</dbReference>
<dbReference type="GO" id="GO:0010125">
    <property type="term" value="P:mycothiol biosynthetic process"/>
    <property type="evidence" value="ECO:0007669"/>
    <property type="project" value="UniProtKB-UniRule"/>
</dbReference>
<dbReference type="CDD" id="cd03800">
    <property type="entry name" value="GT4_sucrose_synthase"/>
    <property type="match status" value="1"/>
</dbReference>
<dbReference type="FunFam" id="3.40.50.2000:FF:000265">
    <property type="entry name" value="D-inositol 3-phosphate glycosyltransferase"/>
    <property type="match status" value="1"/>
</dbReference>
<dbReference type="FunFam" id="3.40.50.2000:FF:000123">
    <property type="entry name" value="D-inositol-3-phosphate glycosyltransferase"/>
    <property type="match status" value="1"/>
</dbReference>
<dbReference type="Gene3D" id="3.40.50.2000">
    <property type="entry name" value="Glycogen Phosphorylase B"/>
    <property type="match status" value="2"/>
</dbReference>
<dbReference type="HAMAP" id="MF_01695">
    <property type="entry name" value="MshA"/>
    <property type="match status" value="1"/>
</dbReference>
<dbReference type="InterPro" id="IPR001296">
    <property type="entry name" value="Glyco_trans_1"/>
</dbReference>
<dbReference type="InterPro" id="IPR028098">
    <property type="entry name" value="Glyco_trans_4-like_N"/>
</dbReference>
<dbReference type="InterPro" id="IPR017814">
    <property type="entry name" value="Mycothiol_biosynthesis_MshA"/>
</dbReference>
<dbReference type="NCBIfam" id="TIGR03449">
    <property type="entry name" value="mycothiol_MshA"/>
    <property type="match status" value="1"/>
</dbReference>
<dbReference type="PANTHER" id="PTHR12526:SF510">
    <property type="entry name" value="D-INOSITOL 3-PHOSPHATE GLYCOSYLTRANSFERASE"/>
    <property type="match status" value="1"/>
</dbReference>
<dbReference type="PANTHER" id="PTHR12526">
    <property type="entry name" value="GLYCOSYLTRANSFERASE"/>
    <property type="match status" value="1"/>
</dbReference>
<dbReference type="Pfam" id="PF13579">
    <property type="entry name" value="Glyco_trans_4_4"/>
    <property type="match status" value="1"/>
</dbReference>
<dbReference type="Pfam" id="PF00534">
    <property type="entry name" value="Glycos_transf_1"/>
    <property type="match status" value="1"/>
</dbReference>
<dbReference type="SUPFAM" id="SSF53756">
    <property type="entry name" value="UDP-Glycosyltransferase/glycogen phosphorylase"/>
    <property type="match status" value="1"/>
</dbReference>
<gene>
    <name evidence="2" type="primary">mshA</name>
    <name type="ordered locus">TBMG_00489</name>
</gene>
<protein>
    <recommendedName>
        <fullName>D-inositol 3-phosphate glycosyltransferase</fullName>
        <ecNumber evidence="2">2.4.1.250</ecNumber>
    </recommendedName>
    <alternativeName>
        <fullName evidence="2">N-acetylglucosamine-inositol-phosphate N-acetylglucosaminyltransferase</fullName>
        <shortName evidence="2">GlcNAc-Ins-P N-acetylglucosaminyltransferase</shortName>
    </alternativeName>
</protein>
<proteinExistence type="inferred from homology"/>
<feature type="chain" id="PRO_0000400143" description="D-inositol 3-phosphate glycosyltransferase">
    <location>
        <begin position="1"/>
        <end position="480"/>
    </location>
</feature>
<feature type="region of interest" description="Disordered" evidence="3">
    <location>
        <begin position="1"/>
        <end position="42"/>
    </location>
</feature>
<feature type="binding site" evidence="2">
    <location>
        <position position="53"/>
    </location>
    <ligand>
        <name>1D-myo-inositol 3-phosphate</name>
        <dbReference type="ChEBI" id="CHEBI:58401"/>
    </ligand>
</feature>
<feature type="binding site" evidence="2">
    <location>
        <begin position="59"/>
        <end position="60"/>
    </location>
    <ligand>
        <name>UDP-N-acetyl-alpha-D-glucosamine</name>
        <dbReference type="ChEBI" id="CHEBI:57705"/>
    </ligand>
</feature>
<feature type="binding site" evidence="2">
    <location>
        <begin position="64"/>
        <end position="69"/>
    </location>
    <ligand>
        <name>1D-myo-inositol 3-phosphate</name>
        <dbReference type="ChEBI" id="CHEBI:58401"/>
    </ligand>
</feature>
<feature type="binding site" evidence="2">
    <location>
        <position position="67"/>
    </location>
    <ligand>
        <name>UDP-N-acetyl-alpha-D-glucosamine</name>
        <dbReference type="ChEBI" id="CHEBI:57705"/>
    </ligand>
</feature>
<feature type="binding site" evidence="2">
    <location>
        <position position="122"/>
    </location>
    <ligand>
        <name>1D-myo-inositol 3-phosphate</name>
        <dbReference type="ChEBI" id="CHEBI:58401"/>
    </ligand>
</feature>
<feature type="binding site" evidence="2">
    <location>
        <position position="155"/>
    </location>
    <ligand>
        <name>1D-myo-inositol 3-phosphate</name>
        <dbReference type="ChEBI" id="CHEBI:58401"/>
    </ligand>
</feature>
<feature type="binding site" evidence="2">
    <location>
        <position position="179"/>
    </location>
    <ligand>
        <name>1D-myo-inositol 3-phosphate</name>
        <dbReference type="ChEBI" id="CHEBI:58401"/>
    </ligand>
</feature>
<feature type="binding site" evidence="2">
    <location>
        <position position="199"/>
    </location>
    <ligand>
        <name>1D-myo-inositol 3-phosphate</name>
        <dbReference type="ChEBI" id="CHEBI:58401"/>
    </ligand>
</feature>
<feature type="binding site" evidence="2">
    <location>
        <position position="273"/>
    </location>
    <ligand>
        <name>UDP-N-acetyl-alpha-D-glucosamine</name>
        <dbReference type="ChEBI" id="CHEBI:57705"/>
    </ligand>
</feature>
<feature type="binding site" evidence="2">
    <location>
        <position position="278"/>
    </location>
    <ligand>
        <name>UDP-N-acetyl-alpha-D-glucosamine</name>
        <dbReference type="ChEBI" id="CHEBI:57705"/>
    </ligand>
</feature>
<feature type="binding site" evidence="2">
    <location>
        <position position="331"/>
    </location>
    <ligand>
        <name>UDP-N-acetyl-alpha-D-glucosamine</name>
        <dbReference type="ChEBI" id="CHEBI:57705"/>
    </ligand>
</feature>
<feature type="binding site" evidence="2">
    <location>
        <position position="340"/>
    </location>
    <ligand>
        <name>Mg(2+)</name>
        <dbReference type="ChEBI" id="CHEBI:18420"/>
    </ligand>
</feature>
<feature type="binding site" evidence="2">
    <location>
        <position position="341"/>
    </location>
    <ligand>
        <name>Mg(2+)</name>
        <dbReference type="ChEBI" id="CHEBI:18420"/>
    </ligand>
</feature>
<feature type="binding site" evidence="2">
    <location>
        <position position="343"/>
    </location>
    <ligand>
        <name>Mg(2+)</name>
        <dbReference type="ChEBI" id="CHEBI:18420"/>
    </ligand>
</feature>
<feature type="binding site" evidence="2">
    <location>
        <position position="353"/>
    </location>
    <ligand>
        <name>UDP-N-acetyl-alpha-D-glucosamine</name>
        <dbReference type="ChEBI" id="CHEBI:57705"/>
    </ligand>
</feature>
<feature type="binding site" evidence="2">
    <location>
        <position position="361"/>
    </location>
    <ligand>
        <name>UDP-N-acetyl-alpha-D-glucosamine</name>
        <dbReference type="ChEBI" id="CHEBI:57705"/>
    </ligand>
</feature>
<feature type="binding site" evidence="2">
    <location>
        <position position="367"/>
    </location>
    <ligand>
        <name>Mg(2+)</name>
        <dbReference type="ChEBI" id="CHEBI:18420"/>
    </ligand>
</feature>
<accession>C6DT68</accession>
<sequence>MAGVRHDDGSGLIAQRRPVRGEGATRSRGPSGPSNRNVSAADDPRRVALLAVHTSPLAQPGTGDAGGMNVYMLQSALHLARRGIEVEIFTRATASADPPVVRVAPGVLVRNVVAGPFEGLDKYDLPTQLCAFAAGVLRAEAVHEPGYYDIVHSHYWLSGQVGWLARDRWAVPLVHTAHTLAAVKNAALADGDGPEPPLRTVGEQQVVDEADRLIVNTDDEARQVISLHGADPARIDVVHPGVDLDVFRPGDRRAARAALGLPVDERVVAFVGRIQPLKAPDIVLRAAAKLPGVRIIVAGGPSGSGLASPDGLVRLADELGISARVTFLPPQSHTDLATLFRAADLVAVPSYSESFGLVAVEAQACGTPVVAAAVGGLPVAVRDGITGTLVSGHEVGQWADAIDHLLRLCAGPRGRVMSRAAARHAATFSWENTTDALLASYRRAIGEYNAERQRRGGEVISDLVAVGKPRHWTPRRGVGA</sequence>
<name>MSHA_MYCTK</name>
<evidence type="ECO:0000250" key="1">
    <source>
        <dbReference type="UniProtKB" id="P9WMY7"/>
    </source>
</evidence>
<evidence type="ECO:0000255" key="2">
    <source>
        <dbReference type="HAMAP-Rule" id="MF_01695"/>
    </source>
</evidence>
<evidence type="ECO:0000256" key="3">
    <source>
        <dbReference type="SAM" id="MobiDB-lite"/>
    </source>
</evidence>